<organism>
    <name type="scientific">Neosartorya fischeri (strain ATCC 1020 / DSM 3700 / CBS 544.65 / FGSC A1164 / JCM 1740 / NRRL 181 / WB 181)</name>
    <name type="common">Aspergillus fischerianus</name>
    <dbReference type="NCBI Taxonomy" id="331117"/>
    <lineage>
        <taxon>Eukaryota</taxon>
        <taxon>Fungi</taxon>
        <taxon>Dikarya</taxon>
        <taxon>Ascomycota</taxon>
        <taxon>Pezizomycotina</taxon>
        <taxon>Eurotiomycetes</taxon>
        <taxon>Eurotiomycetidae</taxon>
        <taxon>Eurotiales</taxon>
        <taxon>Aspergillaceae</taxon>
        <taxon>Aspergillus</taxon>
        <taxon>Aspergillus subgen. Fumigati</taxon>
    </lineage>
</organism>
<protein>
    <recommendedName>
        <fullName evidence="1">Chromatin-remodeling ATPase INO80</fullName>
        <ecNumber evidence="1">3.6.4.-</ecNumber>
    </recommendedName>
    <alternativeName>
        <fullName>Putative DNA helicase ino80</fullName>
        <ecNumber>3.6.4.12</ecNumber>
    </alternativeName>
</protein>
<gene>
    <name type="primary">ino80</name>
    <name type="ORF">NFIA_036870</name>
</gene>
<sequence length="1708" mass="192150">MTGAPPYNPQSPTQQPRFPVYSPPNKNRSYYPNNDQYQQHPPQTPPAFAPQPSLSRSPHYSHAPSPLPATLPPLNGGAPPPGHHSEPSSQYQAHSSAGTPQFSLPRPYSASMMSSNGASPYNHSTSSHAHPSARLESLSQSPPKKETEPLYPIGGNGAPGYSSSMMREPRPASPPRETKHARAADPMSFASILSGPTEESSPKKQPSLPEALPAPATTITPPPPALAPVPARRRLTPPPVTHGLPPTSQLKVKEPEPISPAALPRLEKKPGAEKRRRNAEQEPKSAEALPVASANGAFEPTKAARVSNRKTLTERDAETINKIIAEIDNADKSDVESPGFEAEYDGYIVKSKKRALDAEKAEGIRRKRRRHDFLVKLGKTFEKQANAGVDRFRAANEASVIAEVQAKEIQDEKERKKDMQRKRRRENTVRLEMQKKLEAERKANKANDAAEKAKFLREAERAQRKIKSTKRALEGVTSPEEIGEVTPLAPNLEGGTTSSFHIGRSSPSRRKSGRSGTSRPKKSKEQKQAEKDAAEAAYAAMENDEPLPLAPKEDPRKETLKKEAKGARSKEPTPSPVSTFESKGYNQIYEQIWRDIARKDIPKVYRIKTLSLSTRQENLRKTAQLASKQSRKWQERTNKSMKDTQARAKRTMREMMSFWKRNEREERDLRRLAEKQEIESAKKAEAEREANRQKRKLNFLISQTELYSHFIGRKIKGAGADSSGDTAVDGSDETIQPGKADHTIDLPPSVADVGTKVTNFEDLDFDAEDETALRQAAMANAQNAVKEAQERARAFNAEENPMAALDEGELNFQNPTSLGDIEISQPKMLTAKLKEYQLKGLNWLVNLYEQGINGILADEMGLGKTIQSISVMAYLAEVHNIWGPFLVIAPASTLHNWQQEITKFVPDIKVLPYWGSAKDRKVLRKFWDRKHITYTKESEFHVLVTSYQLVVLDSQYFQKVKWQYMILDEAQAIKSSQSSRWKNLLGFHCRNRLLLTGTPIQNNMQELWALLHFIMPTLFDSHDEFSEWFSKDIESHAQSNTKLNEDQLRRLHMILKPFMLRRVKKHVQQELGDKVEKDVFCDLTYRQRAYYANLRNRVSIMDLIEKAAVGDEADSTTLMNLVMQFRKVCNHPDLFERAETKSPFSVGYFAETASFVREGQNVDVRYSTRNLIEYSLPRLLCSSSGRVDMAGPGNEQAGFRGKYLQHLMNIFTPENIKRSIDEDGGFSFLRFADTSINEAYEQSHLGVFERAVRRRGQSNRLSRLNVIYDDEEDEQTSKSVLPHSLFNIVQRNDRQAVRNVTVEGYMRDLMNVSEVTFEREGLDVIEPSASPAASAPPITISCSGQVALRETQDSFFNVSVRHALFSTPSRQMEQQILEKKLDPAPFSLPPMLPKPISTKGRYTHIEVPSMRRFVTDSGKLAKLDELLRELKAGGHRVLLYFQMTRMIDLMEEYLTYRNYKYCRLDGSTKLEDRRDTVADFQQRPEIFVFLLSTRAGGLGINLTAADTVIFYDSDWNPTIDSQAMDRAHRLGQTRQVTVYRLITRGTIEERIRKRALQKEEVQRVVISGGAAGGVDFNTRNRESRTKDIAMWLADDEQAELIEQKEKEALDRGEVFGAGKGGKKAAQKRKKDLTLDDMYHEGEGNFDDISAKPSGAATPVSTADNFGTPSSTPVPKRGRGRGTGKGSSKRAKTTTERLRLIDGDGGLES</sequence>
<name>INO80_NEOFI</name>
<accession>A1CZE5</accession>
<evidence type="ECO:0000250" key="1">
    <source>
        <dbReference type="UniProtKB" id="P53115"/>
    </source>
</evidence>
<evidence type="ECO:0000250" key="2">
    <source>
        <dbReference type="UniProtKB" id="Q9ULG1"/>
    </source>
</evidence>
<evidence type="ECO:0000255" key="3"/>
<evidence type="ECO:0000255" key="4">
    <source>
        <dbReference type="PROSITE-ProRule" id="PRU00541"/>
    </source>
</evidence>
<evidence type="ECO:0000255" key="5">
    <source>
        <dbReference type="PROSITE-ProRule" id="PRU00542"/>
    </source>
</evidence>
<evidence type="ECO:0000255" key="6">
    <source>
        <dbReference type="PROSITE-ProRule" id="PRU00746"/>
    </source>
</evidence>
<evidence type="ECO:0000256" key="7">
    <source>
        <dbReference type="SAM" id="MobiDB-lite"/>
    </source>
</evidence>
<evidence type="ECO:0000305" key="8"/>
<reference key="1">
    <citation type="journal article" date="2008" name="PLoS Genet.">
        <title>Genomic islands in the pathogenic filamentous fungus Aspergillus fumigatus.</title>
        <authorList>
            <person name="Fedorova N.D."/>
            <person name="Khaldi N."/>
            <person name="Joardar V.S."/>
            <person name="Maiti R."/>
            <person name="Amedeo P."/>
            <person name="Anderson M.J."/>
            <person name="Crabtree J."/>
            <person name="Silva J.C."/>
            <person name="Badger J.H."/>
            <person name="Albarraq A."/>
            <person name="Angiuoli S."/>
            <person name="Bussey H."/>
            <person name="Bowyer P."/>
            <person name="Cotty P.J."/>
            <person name="Dyer P.S."/>
            <person name="Egan A."/>
            <person name="Galens K."/>
            <person name="Fraser-Liggett C.M."/>
            <person name="Haas B.J."/>
            <person name="Inman J.M."/>
            <person name="Kent R."/>
            <person name="Lemieux S."/>
            <person name="Malavazi I."/>
            <person name="Orvis J."/>
            <person name="Roemer T."/>
            <person name="Ronning C.M."/>
            <person name="Sundaram J.P."/>
            <person name="Sutton G."/>
            <person name="Turner G."/>
            <person name="Venter J.C."/>
            <person name="White O.R."/>
            <person name="Whitty B.R."/>
            <person name="Youngman P."/>
            <person name="Wolfe K.H."/>
            <person name="Goldman G.H."/>
            <person name="Wortman J.R."/>
            <person name="Jiang B."/>
            <person name="Denning D.W."/>
            <person name="Nierman W.C."/>
        </authorList>
    </citation>
    <scope>NUCLEOTIDE SEQUENCE [LARGE SCALE GENOMIC DNA]</scope>
    <source>
        <strain>ATCC 1020 / DSM 3700 / CBS 544.65 / FGSC A1164 / JCM 1740 / NRRL 181 / WB 181</strain>
    </source>
</reference>
<feature type="chain" id="PRO_0000350961" description="Chromatin-remodeling ATPase INO80">
    <location>
        <begin position="1"/>
        <end position="1708"/>
    </location>
</feature>
<feature type="domain" description="DBINO" evidence="6">
    <location>
        <begin position="592"/>
        <end position="717"/>
    </location>
</feature>
<feature type="domain" description="Helicase ATP-binding" evidence="4">
    <location>
        <begin position="845"/>
        <end position="1017"/>
    </location>
</feature>
<feature type="domain" description="Helicase C-terminal" evidence="5">
    <location>
        <begin position="1422"/>
        <end position="1582"/>
    </location>
</feature>
<feature type="region of interest" description="Disordered" evidence="7">
    <location>
        <begin position="1"/>
        <end position="312"/>
    </location>
</feature>
<feature type="region of interest" description="Disordered" evidence="7">
    <location>
        <begin position="410"/>
        <end position="584"/>
    </location>
</feature>
<feature type="region of interest" description="Disordered" evidence="7">
    <location>
        <begin position="626"/>
        <end position="648"/>
    </location>
</feature>
<feature type="region of interest" description="Disordered" evidence="7">
    <location>
        <begin position="718"/>
        <end position="750"/>
    </location>
</feature>
<feature type="region of interest" description="Disordered" evidence="7">
    <location>
        <begin position="1643"/>
        <end position="1708"/>
    </location>
</feature>
<feature type="coiled-coil region" evidence="3">
    <location>
        <begin position="395"/>
        <end position="478"/>
    </location>
</feature>
<feature type="coiled-coil region" evidence="3">
    <location>
        <begin position="634"/>
        <end position="706"/>
    </location>
</feature>
<feature type="short sequence motif" description="DEAQ box">
    <location>
        <begin position="968"/>
        <end position="971"/>
    </location>
</feature>
<feature type="compositionally biased region" description="Polar residues" evidence="7">
    <location>
        <begin position="24"/>
        <end position="37"/>
    </location>
</feature>
<feature type="compositionally biased region" description="Polar residues" evidence="7">
    <location>
        <begin position="87"/>
        <end position="102"/>
    </location>
</feature>
<feature type="compositionally biased region" description="Polar residues" evidence="7">
    <location>
        <begin position="111"/>
        <end position="129"/>
    </location>
</feature>
<feature type="compositionally biased region" description="Low complexity" evidence="7">
    <location>
        <begin position="206"/>
        <end position="219"/>
    </location>
</feature>
<feature type="compositionally biased region" description="Basic and acidic residues" evidence="7">
    <location>
        <begin position="265"/>
        <end position="285"/>
    </location>
</feature>
<feature type="compositionally biased region" description="Basic and acidic residues" evidence="7">
    <location>
        <begin position="426"/>
        <end position="463"/>
    </location>
</feature>
<feature type="compositionally biased region" description="Basic residues" evidence="7">
    <location>
        <begin position="507"/>
        <end position="522"/>
    </location>
</feature>
<feature type="compositionally biased region" description="Basic and acidic residues" evidence="7">
    <location>
        <begin position="523"/>
        <end position="534"/>
    </location>
</feature>
<feature type="compositionally biased region" description="Basic and acidic residues" evidence="7">
    <location>
        <begin position="551"/>
        <end position="571"/>
    </location>
</feature>
<feature type="compositionally biased region" description="Basic and acidic residues" evidence="7">
    <location>
        <begin position="632"/>
        <end position="646"/>
    </location>
</feature>
<feature type="compositionally biased region" description="Polar residues" evidence="7">
    <location>
        <begin position="1658"/>
        <end position="1672"/>
    </location>
</feature>
<feature type="compositionally biased region" description="Basic residues" evidence="7">
    <location>
        <begin position="1675"/>
        <end position="1691"/>
    </location>
</feature>
<feature type="compositionally biased region" description="Basic and acidic residues" evidence="7">
    <location>
        <begin position="1692"/>
        <end position="1701"/>
    </location>
</feature>
<feature type="binding site" evidence="4">
    <location>
        <begin position="858"/>
        <end position="865"/>
    </location>
    <ligand>
        <name>ATP</name>
        <dbReference type="ChEBI" id="CHEBI:30616"/>
    </ligand>
</feature>
<dbReference type="EC" id="3.6.4.-" evidence="1"/>
<dbReference type="EC" id="3.6.4.12"/>
<dbReference type="EMBL" id="DS027686">
    <property type="protein sequence ID" value="EAW24115.1"/>
    <property type="molecule type" value="Genomic_DNA"/>
</dbReference>
<dbReference type="RefSeq" id="XP_001266012.1">
    <property type="nucleotide sequence ID" value="XM_001266011.1"/>
</dbReference>
<dbReference type="SMR" id="A1CZE5"/>
<dbReference type="STRING" id="331117.A1CZE5"/>
<dbReference type="EnsemblFungi" id="EAW24115">
    <property type="protein sequence ID" value="EAW24115"/>
    <property type="gene ID" value="NFIA_036870"/>
</dbReference>
<dbReference type="GeneID" id="4592352"/>
<dbReference type="KEGG" id="nfi:NFIA_036870"/>
<dbReference type="VEuPathDB" id="FungiDB:NFIA_036870"/>
<dbReference type="eggNOG" id="KOG0388">
    <property type="taxonomic scope" value="Eukaryota"/>
</dbReference>
<dbReference type="HOGENOM" id="CLU_000315_26_0_1"/>
<dbReference type="OMA" id="NLLGFHC"/>
<dbReference type="OrthoDB" id="372624at2759"/>
<dbReference type="Proteomes" id="UP000006702">
    <property type="component" value="Unassembled WGS sequence"/>
</dbReference>
<dbReference type="GO" id="GO:0000775">
    <property type="term" value="C:chromosome, centromeric region"/>
    <property type="evidence" value="ECO:0007669"/>
    <property type="project" value="EnsemblFungi"/>
</dbReference>
<dbReference type="GO" id="GO:0000781">
    <property type="term" value="C:chromosome, telomeric region"/>
    <property type="evidence" value="ECO:0007669"/>
    <property type="project" value="GOC"/>
</dbReference>
<dbReference type="GO" id="GO:0031011">
    <property type="term" value="C:Ino80 complex"/>
    <property type="evidence" value="ECO:0007669"/>
    <property type="project" value="EnsemblFungi"/>
</dbReference>
<dbReference type="GO" id="GO:0005524">
    <property type="term" value="F:ATP binding"/>
    <property type="evidence" value="ECO:0007669"/>
    <property type="project" value="UniProtKB-KW"/>
</dbReference>
<dbReference type="GO" id="GO:0016887">
    <property type="term" value="F:ATP hydrolysis activity"/>
    <property type="evidence" value="ECO:0007669"/>
    <property type="project" value="EnsemblFungi"/>
</dbReference>
<dbReference type="GO" id="GO:0140658">
    <property type="term" value="F:ATP-dependent chromatin remodeler activity"/>
    <property type="evidence" value="ECO:0007669"/>
    <property type="project" value="InterPro"/>
</dbReference>
<dbReference type="GO" id="GO:0003677">
    <property type="term" value="F:DNA binding"/>
    <property type="evidence" value="ECO:0007669"/>
    <property type="project" value="UniProtKB-KW"/>
</dbReference>
<dbReference type="GO" id="GO:0042393">
    <property type="term" value="F:histone binding"/>
    <property type="evidence" value="ECO:0007669"/>
    <property type="project" value="TreeGrafter"/>
</dbReference>
<dbReference type="GO" id="GO:0034080">
    <property type="term" value="P:CENP-A containing chromatin assembly"/>
    <property type="evidence" value="ECO:0007669"/>
    <property type="project" value="EnsemblFungi"/>
</dbReference>
<dbReference type="GO" id="GO:0006281">
    <property type="term" value="P:DNA repair"/>
    <property type="evidence" value="ECO:0007669"/>
    <property type="project" value="UniProtKB-KW"/>
</dbReference>
<dbReference type="GO" id="GO:0045944">
    <property type="term" value="P:positive regulation of transcription by RNA polymerase II"/>
    <property type="evidence" value="ECO:0007669"/>
    <property type="project" value="EnsemblFungi"/>
</dbReference>
<dbReference type="GO" id="GO:0032006">
    <property type="term" value="P:regulation of TOR signaling"/>
    <property type="evidence" value="ECO:0007669"/>
    <property type="project" value="EnsemblFungi"/>
</dbReference>
<dbReference type="GO" id="GO:0031509">
    <property type="term" value="P:subtelomeric heterochromatin formation"/>
    <property type="evidence" value="ECO:0007669"/>
    <property type="project" value="EnsemblFungi"/>
</dbReference>
<dbReference type="GO" id="GO:0000722">
    <property type="term" value="P:telomere maintenance via recombination"/>
    <property type="evidence" value="ECO:0007669"/>
    <property type="project" value="EnsemblFungi"/>
</dbReference>
<dbReference type="GO" id="GO:0006366">
    <property type="term" value="P:transcription by RNA polymerase II"/>
    <property type="evidence" value="ECO:0007669"/>
    <property type="project" value="EnsemblFungi"/>
</dbReference>
<dbReference type="CDD" id="cd18002">
    <property type="entry name" value="DEXQc_INO80"/>
    <property type="match status" value="1"/>
</dbReference>
<dbReference type="CDD" id="cd18793">
    <property type="entry name" value="SF2_C_SNF"/>
    <property type="match status" value="1"/>
</dbReference>
<dbReference type="FunFam" id="3.40.50.10810:FF:000006">
    <property type="entry name" value="Putative DNA helicase INO80"/>
    <property type="match status" value="1"/>
</dbReference>
<dbReference type="FunFam" id="3.40.50.300:FF:001269">
    <property type="entry name" value="SNF2 family helicase/ATPase"/>
    <property type="match status" value="1"/>
</dbReference>
<dbReference type="Gene3D" id="3.40.50.300">
    <property type="entry name" value="P-loop containing nucleotide triphosphate hydrolases"/>
    <property type="match status" value="1"/>
</dbReference>
<dbReference type="Gene3D" id="3.40.50.10810">
    <property type="entry name" value="Tandem AAA-ATPase domain"/>
    <property type="match status" value="1"/>
</dbReference>
<dbReference type="InterPro" id="IPR020838">
    <property type="entry name" value="DBINO"/>
</dbReference>
<dbReference type="InterPro" id="IPR031047">
    <property type="entry name" value="DEXQc_INO80"/>
</dbReference>
<dbReference type="InterPro" id="IPR014001">
    <property type="entry name" value="Helicase_ATP-bd"/>
</dbReference>
<dbReference type="InterPro" id="IPR001650">
    <property type="entry name" value="Helicase_C-like"/>
</dbReference>
<dbReference type="InterPro" id="IPR050520">
    <property type="entry name" value="INO80/SWR1_helicase"/>
</dbReference>
<dbReference type="InterPro" id="IPR027417">
    <property type="entry name" value="P-loop_NTPase"/>
</dbReference>
<dbReference type="InterPro" id="IPR038718">
    <property type="entry name" value="SNF2-like_sf"/>
</dbReference>
<dbReference type="InterPro" id="IPR049730">
    <property type="entry name" value="SNF2/RAD54-like_C"/>
</dbReference>
<dbReference type="InterPro" id="IPR000330">
    <property type="entry name" value="SNF2_N"/>
</dbReference>
<dbReference type="PANTHER" id="PTHR45685:SF2">
    <property type="entry name" value="CHROMATIN-REMODELING ATPASE INO80"/>
    <property type="match status" value="1"/>
</dbReference>
<dbReference type="PANTHER" id="PTHR45685">
    <property type="entry name" value="HELICASE SRCAP-RELATED"/>
    <property type="match status" value="1"/>
</dbReference>
<dbReference type="Pfam" id="PF13892">
    <property type="entry name" value="DBINO"/>
    <property type="match status" value="1"/>
</dbReference>
<dbReference type="Pfam" id="PF00271">
    <property type="entry name" value="Helicase_C"/>
    <property type="match status" value="1"/>
</dbReference>
<dbReference type="Pfam" id="PF00176">
    <property type="entry name" value="SNF2-rel_dom"/>
    <property type="match status" value="1"/>
</dbReference>
<dbReference type="SMART" id="SM00487">
    <property type="entry name" value="DEXDc"/>
    <property type="match status" value="1"/>
</dbReference>
<dbReference type="SMART" id="SM00490">
    <property type="entry name" value="HELICc"/>
    <property type="match status" value="1"/>
</dbReference>
<dbReference type="SUPFAM" id="SSF52540">
    <property type="entry name" value="P-loop containing nucleoside triphosphate hydrolases"/>
    <property type="match status" value="2"/>
</dbReference>
<dbReference type="PROSITE" id="PS51413">
    <property type="entry name" value="DBINO"/>
    <property type="match status" value="1"/>
</dbReference>
<dbReference type="PROSITE" id="PS51192">
    <property type="entry name" value="HELICASE_ATP_BIND_1"/>
    <property type="match status" value="1"/>
</dbReference>
<dbReference type="PROSITE" id="PS51194">
    <property type="entry name" value="HELICASE_CTER"/>
    <property type="match status" value="1"/>
</dbReference>
<keyword id="KW-0010">Activator</keyword>
<keyword id="KW-0067">ATP-binding</keyword>
<keyword id="KW-0175">Coiled coil</keyword>
<keyword id="KW-0227">DNA damage</keyword>
<keyword id="KW-0234">DNA repair</keyword>
<keyword id="KW-0238">DNA-binding</keyword>
<keyword id="KW-0378">Hydrolase</keyword>
<keyword id="KW-0547">Nucleotide-binding</keyword>
<keyword id="KW-0539">Nucleus</keyword>
<keyword id="KW-1185">Reference proteome</keyword>
<keyword id="KW-0804">Transcription</keyword>
<keyword id="KW-0805">Transcription regulation</keyword>
<comment type="function">
    <text evidence="6">ATPase component of the INO80 complex which remodels chromatin by shifting nucleosomes and is involved in DNA repair.</text>
</comment>
<comment type="catalytic activity">
    <reaction evidence="1">
        <text>ATP + H2O = ADP + phosphate + H(+)</text>
        <dbReference type="Rhea" id="RHEA:13065"/>
        <dbReference type="ChEBI" id="CHEBI:15377"/>
        <dbReference type="ChEBI" id="CHEBI:15378"/>
        <dbReference type="ChEBI" id="CHEBI:30616"/>
        <dbReference type="ChEBI" id="CHEBI:43474"/>
        <dbReference type="ChEBI" id="CHEBI:456216"/>
        <dbReference type="EC" id="3.6.4.12"/>
    </reaction>
</comment>
<comment type="subunit">
    <text evidence="6">Component of the INO80 chromatin-remodeling complex.</text>
</comment>
<comment type="subcellular location">
    <subcellularLocation>
        <location evidence="6">Nucleus</location>
    </subcellularLocation>
</comment>
<comment type="domain">
    <text evidence="2">The DBINO region is involved in binding to DNA.</text>
</comment>
<comment type="similarity">
    <text evidence="8">Belongs to the SNF2/RAD54 helicase family.</text>
</comment>
<proteinExistence type="inferred from homology"/>